<gene>
    <name evidence="1" type="primary">rplW</name>
    <name type="ordered locus">Rmag_0167</name>
</gene>
<keyword id="KW-0687">Ribonucleoprotein</keyword>
<keyword id="KW-0689">Ribosomal protein</keyword>
<keyword id="KW-0694">RNA-binding</keyword>
<keyword id="KW-0699">rRNA-binding</keyword>
<feature type="chain" id="PRO_1000068153" description="Large ribosomal subunit protein uL23">
    <location>
        <begin position="1"/>
        <end position="96"/>
    </location>
</feature>
<comment type="function">
    <text evidence="1">One of the early assembly proteins it binds 23S rRNA. One of the proteins that surrounds the polypeptide exit tunnel on the outside of the ribosome. Forms the main docking site for trigger factor binding to the ribosome.</text>
</comment>
<comment type="subunit">
    <text evidence="1">Part of the 50S ribosomal subunit. Contacts protein L29, and trigger factor when it is bound to the ribosome.</text>
</comment>
<comment type="similarity">
    <text evidence="1">Belongs to the universal ribosomal protein uL23 family.</text>
</comment>
<organism>
    <name type="scientific">Ruthia magnifica subsp. Calyptogena magnifica</name>
    <dbReference type="NCBI Taxonomy" id="413404"/>
    <lineage>
        <taxon>Bacteria</taxon>
        <taxon>Pseudomonadati</taxon>
        <taxon>Pseudomonadota</taxon>
        <taxon>Gammaproteobacteria</taxon>
        <taxon>Candidatus Pseudothioglobaceae</taxon>
        <taxon>Candidatus Ruthturnera</taxon>
    </lineage>
</organism>
<evidence type="ECO:0000255" key="1">
    <source>
        <dbReference type="HAMAP-Rule" id="MF_01369"/>
    </source>
</evidence>
<evidence type="ECO:0000305" key="2"/>
<reference key="1">
    <citation type="journal article" date="2007" name="Science">
        <title>The Calyptogena magnifica chemoautotrophic symbiont genome.</title>
        <authorList>
            <person name="Newton I.L.G."/>
            <person name="Woyke T."/>
            <person name="Auchtung T.A."/>
            <person name="Dilly G.F."/>
            <person name="Dutton R.J."/>
            <person name="Fisher M.C."/>
            <person name="Fontanez K.M."/>
            <person name="Lau E."/>
            <person name="Stewart F.J."/>
            <person name="Richardson P.M."/>
            <person name="Barry K.W."/>
            <person name="Saunders E."/>
            <person name="Detter J.C."/>
            <person name="Wu D."/>
            <person name="Eisen J.A."/>
            <person name="Cavanaugh C.M."/>
        </authorList>
    </citation>
    <scope>NUCLEOTIDE SEQUENCE [LARGE SCALE GENOMIC DNA]</scope>
</reference>
<sequence>MNQEKILKILLAPIVSEKTTMLSAHNQYAFKVRVDCSKREIKAAVEMLFSVNVENVTTSIVKGKKKIFKGRIGSRPNWKKAMVKVSEGQMIDVSRT</sequence>
<dbReference type="EMBL" id="CP000488">
    <property type="protein sequence ID" value="ABL01959.1"/>
    <property type="molecule type" value="Genomic_DNA"/>
</dbReference>
<dbReference type="RefSeq" id="WP_011737585.1">
    <property type="nucleotide sequence ID" value="NC_008610.1"/>
</dbReference>
<dbReference type="SMR" id="A1AVK2"/>
<dbReference type="STRING" id="413404.Rmag_0167"/>
<dbReference type="KEGG" id="rma:Rmag_0167"/>
<dbReference type="eggNOG" id="COG0089">
    <property type="taxonomic scope" value="Bacteria"/>
</dbReference>
<dbReference type="HOGENOM" id="CLU_037562_3_1_6"/>
<dbReference type="OrthoDB" id="9793353at2"/>
<dbReference type="Proteomes" id="UP000002587">
    <property type="component" value="Chromosome"/>
</dbReference>
<dbReference type="GO" id="GO:1990904">
    <property type="term" value="C:ribonucleoprotein complex"/>
    <property type="evidence" value="ECO:0007669"/>
    <property type="project" value="UniProtKB-KW"/>
</dbReference>
<dbReference type="GO" id="GO:0005840">
    <property type="term" value="C:ribosome"/>
    <property type="evidence" value="ECO:0007669"/>
    <property type="project" value="UniProtKB-KW"/>
</dbReference>
<dbReference type="GO" id="GO:0019843">
    <property type="term" value="F:rRNA binding"/>
    <property type="evidence" value="ECO:0007669"/>
    <property type="project" value="UniProtKB-UniRule"/>
</dbReference>
<dbReference type="GO" id="GO:0003735">
    <property type="term" value="F:structural constituent of ribosome"/>
    <property type="evidence" value="ECO:0007669"/>
    <property type="project" value="InterPro"/>
</dbReference>
<dbReference type="GO" id="GO:0006412">
    <property type="term" value="P:translation"/>
    <property type="evidence" value="ECO:0007669"/>
    <property type="project" value="UniProtKB-UniRule"/>
</dbReference>
<dbReference type="FunFam" id="3.30.70.330:FF:000001">
    <property type="entry name" value="50S ribosomal protein L23"/>
    <property type="match status" value="1"/>
</dbReference>
<dbReference type="Gene3D" id="3.30.70.330">
    <property type="match status" value="1"/>
</dbReference>
<dbReference type="HAMAP" id="MF_01369_B">
    <property type="entry name" value="Ribosomal_uL23_B"/>
    <property type="match status" value="1"/>
</dbReference>
<dbReference type="InterPro" id="IPR012677">
    <property type="entry name" value="Nucleotide-bd_a/b_plait_sf"/>
</dbReference>
<dbReference type="InterPro" id="IPR013025">
    <property type="entry name" value="Ribosomal_uL23-like"/>
</dbReference>
<dbReference type="InterPro" id="IPR012678">
    <property type="entry name" value="Ribosomal_uL23/eL15/eS24_sf"/>
</dbReference>
<dbReference type="NCBIfam" id="NF004359">
    <property type="entry name" value="PRK05738.1-3"/>
    <property type="match status" value="1"/>
</dbReference>
<dbReference type="NCBIfam" id="NF004363">
    <property type="entry name" value="PRK05738.2-4"/>
    <property type="match status" value="1"/>
</dbReference>
<dbReference type="PANTHER" id="PTHR11620">
    <property type="entry name" value="60S RIBOSOMAL PROTEIN L23A"/>
    <property type="match status" value="1"/>
</dbReference>
<dbReference type="Pfam" id="PF00276">
    <property type="entry name" value="Ribosomal_L23"/>
    <property type="match status" value="1"/>
</dbReference>
<dbReference type="SUPFAM" id="SSF54189">
    <property type="entry name" value="Ribosomal proteins S24e, L23 and L15e"/>
    <property type="match status" value="1"/>
</dbReference>
<protein>
    <recommendedName>
        <fullName evidence="1">Large ribosomal subunit protein uL23</fullName>
    </recommendedName>
    <alternativeName>
        <fullName evidence="2">50S ribosomal protein L23</fullName>
    </alternativeName>
</protein>
<name>RL23_RUTMC</name>
<accession>A1AVK2</accession>
<proteinExistence type="inferred from homology"/>